<keyword id="KW-0067">ATP-binding</keyword>
<keyword id="KW-0131">Cell cycle</keyword>
<keyword id="KW-0132">Cell division</keyword>
<keyword id="KW-1003">Cell membrane</keyword>
<keyword id="KW-0963">Cytoplasm</keyword>
<keyword id="KW-0418">Kinase</keyword>
<keyword id="KW-0472">Membrane</keyword>
<keyword id="KW-0547">Nucleotide-binding</keyword>
<keyword id="KW-0539">Nucleus</keyword>
<keyword id="KW-0597">Phosphoprotein</keyword>
<keyword id="KW-0723">Serine/threonine-protein kinase</keyword>
<keyword id="KW-0808">Transferase</keyword>
<keyword id="KW-0879">Wnt signaling pathway</keyword>
<accession>B0VXL7</accession>
<proteinExistence type="inferred from homology"/>
<organism>
    <name type="scientific">Plecturocebus moloch</name>
    <name type="common">Dusky titi monkey</name>
    <name type="synonym">Callicebus moloch</name>
    <dbReference type="NCBI Taxonomy" id="9523"/>
    <lineage>
        <taxon>Eukaryota</taxon>
        <taxon>Metazoa</taxon>
        <taxon>Chordata</taxon>
        <taxon>Craniata</taxon>
        <taxon>Vertebrata</taxon>
        <taxon>Euteleostomi</taxon>
        <taxon>Mammalia</taxon>
        <taxon>Eutheria</taxon>
        <taxon>Euarchontoglires</taxon>
        <taxon>Primates</taxon>
        <taxon>Haplorrhini</taxon>
        <taxon>Platyrrhini</taxon>
        <taxon>Pitheciidae</taxon>
        <taxon>Callicebinae</taxon>
        <taxon>Plecturocebus</taxon>
    </lineage>
</organism>
<sequence>MHGYFGCNAAAEPGYSAFLGTPQICVTKMSTRNCQGMDSVIKPLDTIPEDKKVRVQRTQSTFDPFEKPANQVKRVHSENNACINFKTSSTGKESPKVRRHSSPSSPTSPKFGKADSYEKLEKLGEGSYATVYKGKSKVNGKLVALKVIRLQEEEGTPFTAIREASLLKGLKHANIVLLHDIIHTKETLTLVFEYVHTDLCQYMDKHPGGLHPDNVKLFLFQLLRGLSYIHQRYILHRDLKPQNLLISDTGELKLADFGLARAKSVPSHTYSNEVVTLWYRPPDVLLGSTEYSTCLDMWGVGCIFVEMIQGVAAFPGMKDIQDQLERIFLVLGTPNEDTWPGVHSLPHFKPERFTLYSSKNLRQAWNKLSYVNHAEDLASKLLQCSPKNRLSAQAALSHEYFSDLPPRLWELTDMSSIFTIPNVRLQPEAGESMRAFGKNNSYGKSLSNSKH</sequence>
<dbReference type="EC" id="2.7.11.22"/>
<dbReference type="EMBL" id="DP000601">
    <property type="protein sequence ID" value="ACA35057.1"/>
    <property type="molecule type" value="Genomic_DNA"/>
</dbReference>
<dbReference type="SMR" id="B0VXL7"/>
<dbReference type="GO" id="GO:0000308">
    <property type="term" value="C:cytoplasmic cyclin-dependent protein kinase holoenzyme complex"/>
    <property type="evidence" value="ECO:0000250"/>
    <property type="project" value="UniProtKB"/>
</dbReference>
<dbReference type="GO" id="GO:0005829">
    <property type="term" value="C:cytosol"/>
    <property type="evidence" value="ECO:0007669"/>
    <property type="project" value="TreeGrafter"/>
</dbReference>
<dbReference type="GO" id="GO:0005634">
    <property type="term" value="C:nucleus"/>
    <property type="evidence" value="ECO:0007669"/>
    <property type="project" value="UniProtKB-SubCell"/>
</dbReference>
<dbReference type="GO" id="GO:0005886">
    <property type="term" value="C:plasma membrane"/>
    <property type="evidence" value="ECO:0000250"/>
    <property type="project" value="UniProtKB"/>
</dbReference>
<dbReference type="GO" id="GO:0005524">
    <property type="term" value="F:ATP binding"/>
    <property type="evidence" value="ECO:0007669"/>
    <property type="project" value="UniProtKB-KW"/>
</dbReference>
<dbReference type="GO" id="GO:0030332">
    <property type="term" value="F:cyclin binding"/>
    <property type="evidence" value="ECO:0007669"/>
    <property type="project" value="TreeGrafter"/>
</dbReference>
<dbReference type="GO" id="GO:0004693">
    <property type="term" value="F:cyclin-dependent protein serine/threonine kinase activity"/>
    <property type="evidence" value="ECO:0000250"/>
    <property type="project" value="UniProtKB"/>
</dbReference>
<dbReference type="GO" id="GO:0106310">
    <property type="term" value="F:protein serine kinase activity"/>
    <property type="evidence" value="ECO:0007669"/>
    <property type="project" value="RHEA"/>
</dbReference>
<dbReference type="GO" id="GO:0051301">
    <property type="term" value="P:cell division"/>
    <property type="evidence" value="ECO:0007669"/>
    <property type="project" value="UniProtKB-KW"/>
</dbReference>
<dbReference type="GO" id="GO:0000086">
    <property type="term" value="P:G2/M transition of mitotic cell cycle"/>
    <property type="evidence" value="ECO:0000250"/>
    <property type="project" value="UniProtKB"/>
</dbReference>
<dbReference type="GO" id="GO:0060828">
    <property type="term" value="P:regulation of canonical Wnt signaling pathway"/>
    <property type="evidence" value="ECO:0000250"/>
    <property type="project" value="UniProtKB"/>
</dbReference>
<dbReference type="GO" id="GO:0016055">
    <property type="term" value="P:Wnt signaling pathway"/>
    <property type="evidence" value="ECO:0007669"/>
    <property type="project" value="UniProtKB-KW"/>
</dbReference>
<dbReference type="CDD" id="cd07869">
    <property type="entry name" value="STKc_PFTAIRE1"/>
    <property type="match status" value="1"/>
</dbReference>
<dbReference type="FunFam" id="1.10.510.10:FF:000131">
    <property type="entry name" value="cyclin-dependent kinase 14 isoform X1"/>
    <property type="match status" value="1"/>
</dbReference>
<dbReference type="FunFam" id="3.30.200.20:FF:000007">
    <property type="entry name" value="Cyclin-dependent kinase 14, putative"/>
    <property type="match status" value="1"/>
</dbReference>
<dbReference type="Gene3D" id="3.30.200.20">
    <property type="entry name" value="Phosphorylase Kinase, domain 1"/>
    <property type="match status" value="1"/>
</dbReference>
<dbReference type="Gene3D" id="1.10.510.10">
    <property type="entry name" value="Transferase(Phosphotransferase) domain 1"/>
    <property type="match status" value="1"/>
</dbReference>
<dbReference type="InterPro" id="IPR050108">
    <property type="entry name" value="CDK"/>
</dbReference>
<dbReference type="InterPro" id="IPR011009">
    <property type="entry name" value="Kinase-like_dom_sf"/>
</dbReference>
<dbReference type="InterPro" id="IPR000719">
    <property type="entry name" value="Prot_kinase_dom"/>
</dbReference>
<dbReference type="InterPro" id="IPR017441">
    <property type="entry name" value="Protein_kinase_ATP_BS"/>
</dbReference>
<dbReference type="InterPro" id="IPR008271">
    <property type="entry name" value="Ser/Thr_kinase_AS"/>
</dbReference>
<dbReference type="PANTHER" id="PTHR24056">
    <property type="entry name" value="CELL DIVISION PROTEIN KINASE"/>
    <property type="match status" value="1"/>
</dbReference>
<dbReference type="PANTHER" id="PTHR24056:SF154">
    <property type="entry name" value="CYCLIN-DEPENDENT KINASE 14"/>
    <property type="match status" value="1"/>
</dbReference>
<dbReference type="Pfam" id="PF00069">
    <property type="entry name" value="Pkinase"/>
    <property type="match status" value="1"/>
</dbReference>
<dbReference type="SMART" id="SM00220">
    <property type="entry name" value="S_TKc"/>
    <property type="match status" value="1"/>
</dbReference>
<dbReference type="SUPFAM" id="SSF56112">
    <property type="entry name" value="Protein kinase-like (PK-like)"/>
    <property type="match status" value="1"/>
</dbReference>
<dbReference type="PROSITE" id="PS00107">
    <property type="entry name" value="PROTEIN_KINASE_ATP"/>
    <property type="match status" value="1"/>
</dbReference>
<dbReference type="PROSITE" id="PS50011">
    <property type="entry name" value="PROTEIN_KINASE_DOM"/>
    <property type="match status" value="1"/>
</dbReference>
<dbReference type="PROSITE" id="PS00108">
    <property type="entry name" value="PROTEIN_KINASE_ST"/>
    <property type="match status" value="1"/>
</dbReference>
<reference key="1">
    <citation type="submission" date="2005-11" db="EMBL/GenBank/DDBJ databases">
        <title>NISC comparative sequencing initiative.</title>
        <authorList>
            <person name="Antonellis A."/>
            <person name="Ayele K."/>
            <person name="Benjamin B."/>
            <person name="Blakesley R.W."/>
            <person name="Boakye A."/>
            <person name="Bouffard G.G."/>
            <person name="Brinkley C."/>
            <person name="Brooks S."/>
            <person name="Chu G."/>
            <person name="Coleman H."/>
            <person name="Engle J."/>
            <person name="Gestole M."/>
            <person name="Greene A."/>
            <person name="Guan X."/>
            <person name="Gupta J."/>
            <person name="Haghighi P."/>
            <person name="Han J."/>
            <person name="Hansen N."/>
            <person name="Ho S.-L."/>
            <person name="Hu P."/>
            <person name="Hunter G."/>
            <person name="Hurle B."/>
            <person name="Idol J.R."/>
            <person name="Kwong P."/>
            <person name="Laric P."/>
            <person name="Larson S."/>
            <person name="Lee-Lin S.-Q."/>
            <person name="Legaspi R."/>
            <person name="Madden M."/>
            <person name="Maduro Q.L."/>
            <person name="Maduro V.B."/>
            <person name="Margulies E.H."/>
            <person name="Masiello C."/>
            <person name="Maskeri B."/>
            <person name="McDowell J."/>
            <person name="Mojidi H.A."/>
            <person name="Mullikin J.C."/>
            <person name="Oestreicher J.S."/>
            <person name="Park M."/>
            <person name="Portnoy M.E."/>
            <person name="Prasad A."/>
            <person name="Puri O."/>
            <person name="Reddix-Dugue N."/>
            <person name="Schandler K."/>
            <person name="Schueler M.G."/>
            <person name="Sison C."/>
            <person name="Stantripop S."/>
            <person name="Stephen E."/>
            <person name="Taye A."/>
            <person name="Thomas J.W."/>
            <person name="Thomas P.J."/>
            <person name="Tsipouri V."/>
            <person name="Ung L."/>
            <person name="Vogt J.L."/>
            <person name="Wetherby K.D."/>
            <person name="Young A."/>
            <person name="Green E.D."/>
        </authorList>
    </citation>
    <scope>NUCLEOTIDE SEQUENCE [LARGE SCALE GENOMIC DNA]</scope>
</reference>
<evidence type="ECO:0000250" key="1"/>
<evidence type="ECO:0000250" key="2">
    <source>
        <dbReference type="UniProtKB" id="O94921"/>
    </source>
</evidence>
<evidence type="ECO:0000255" key="3">
    <source>
        <dbReference type="PROSITE-ProRule" id="PRU00159"/>
    </source>
</evidence>
<evidence type="ECO:0000255" key="4">
    <source>
        <dbReference type="PROSITE-ProRule" id="PRU10027"/>
    </source>
</evidence>
<evidence type="ECO:0000256" key="5">
    <source>
        <dbReference type="SAM" id="MobiDB-lite"/>
    </source>
</evidence>
<evidence type="ECO:0000305" key="6"/>
<feature type="chain" id="PRO_0000391898" description="Cyclin-dependent kinase 14">
    <location>
        <begin position="1"/>
        <end position="451"/>
    </location>
</feature>
<feature type="domain" description="Protein kinase" evidence="3">
    <location>
        <begin position="117"/>
        <end position="401"/>
    </location>
</feature>
<feature type="region of interest" description="Disordered" evidence="5">
    <location>
        <begin position="84"/>
        <end position="114"/>
    </location>
</feature>
<feature type="active site" description="Proton acceptor" evidence="3 4">
    <location>
        <position position="238"/>
    </location>
</feature>
<feature type="binding site" evidence="3">
    <location>
        <begin position="123"/>
        <end position="131"/>
    </location>
    <ligand>
        <name>ATP</name>
        <dbReference type="ChEBI" id="CHEBI:30616"/>
    </ligand>
</feature>
<feature type="binding site" evidence="3">
    <location>
        <position position="146"/>
    </location>
    <ligand>
        <name>ATP</name>
        <dbReference type="ChEBI" id="CHEBI:30616"/>
    </ligand>
</feature>
<feature type="modified residue" description="Phosphoserine" evidence="2">
    <location>
        <position position="60"/>
    </location>
</feature>
<feature type="modified residue" description="Phosphoserine" evidence="2">
    <location>
        <position position="77"/>
    </location>
</feature>
<feature type="modified residue" description="Phosphoserine" evidence="2">
    <location>
        <position position="116"/>
    </location>
</feature>
<protein>
    <recommendedName>
        <fullName>Cyclin-dependent kinase 14</fullName>
        <ecNumber>2.7.11.22</ecNumber>
    </recommendedName>
    <alternativeName>
        <fullName>Cell division protein kinase 14</fullName>
    </alternativeName>
</protein>
<gene>
    <name type="primary">CDK14</name>
    <name type="synonym">PFTK1</name>
</gene>
<comment type="function">
    <text evidence="1">Serine/threonine-protein kinase involved in the control of the eukaryotic cell cycle, whose activity is controlled by an associated cyclin. Acts as a cell-cycle regulator of Wnt signaling pathway during G2/M phase by mediating the phosphorylation of LRP6 at 'Ser-1490', leading to the activation of the Wnt signaling pathway. Acts as a regulator of cell cycle progression and cell proliferation via its interaction with CCDN3. Phosphorylates RB1 in vitro, however the relevance of such result remains to be confirmed in vivo. May also play a role in meiosis, neuron differentiation and may indirectly act as a negative regulator of insulin-responsive glucose transport (By similarity).</text>
</comment>
<comment type="catalytic activity">
    <reaction>
        <text>L-seryl-[protein] + ATP = O-phospho-L-seryl-[protein] + ADP + H(+)</text>
        <dbReference type="Rhea" id="RHEA:17989"/>
        <dbReference type="Rhea" id="RHEA-COMP:9863"/>
        <dbReference type="Rhea" id="RHEA-COMP:11604"/>
        <dbReference type="ChEBI" id="CHEBI:15378"/>
        <dbReference type="ChEBI" id="CHEBI:29999"/>
        <dbReference type="ChEBI" id="CHEBI:30616"/>
        <dbReference type="ChEBI" id="CHEBI:83421"/>
        <dbReference type="ChEBI" id="CHEBI:456216"/>
        <dbReference type="EC" id="2.7.11.22"/>
    </reaction>
</comment>
<comment type="catalytic activity">
    <reaction>
        <text>L-threonyl-[protein] + ATP = O-phospho-L-threonyl-[protein] + ADP + H(+)</text>
        <dbReference type="Rhea" id="RHEA:46608"/>
        <dbReference type="Rhea" id="RHEA-COMP:11060"/>
        <dbReference type="Rhea" id="RHEA-COMP:11605"/>
        <dbReference type="ChEBI" id="CHEBI:15378"/>
        <dbReference type="ChEBI" id="CHEBI:30013"/>
        <dbReference type="ChEBI" id="CHEBI:30616"/>
        <dbReference type="ChEBI" id="CHEBI:61977"/>
        <dbReference type="ChEBI" id="CHEBI:456216"/>
        <dbReference type="EC" id="2.7.11.22"/>
    </reaction>
</comment>
<comment type="activity regulation">
    <text evidence="1">Serine/threonine-protein kinase activity is promoted by associated cyclins CCDN3 and CCNY and repressed by CDKN1A.</text>
</comment>
<comment type="subunit">
    <text evidence="2">Found in a complex with LRP6, CCNY and CAPRIN2 during G2/M stage; CAPRIN2 functions as a scaffold for the complex by binding to CCNY via its N terminus and to CDK14 via its C terminus. Interacts with CCNY; CCNY mediates its recruitment to the plasma membrane and promotes phosphorylation of LRP6. Interacts with CCDN3 and CDKN1A. Interacts with SEPT8. Interacts with 14-3-3 proteina YWHAB, YWHAE, YWHAH and YWHAQ.</text>
</comment>
<comment type="subcellular location">
    <subcellularLocation>
        <location evidence="1">Cell membrane</location>
        <topology evidence="1">Peripheral membrane protein</topology>
    </subcellularLocation>
    <subcellularLocation>
        <location evidence="1">Cytoplasm</location>
    </subcellularLocation>
    <subcellularLocation>
        <location evidence="1">Nucleus</location>
    </subcellularLocation>
    <text evidence="1">Recruited to the cell membrane by CCNY.</text>
</comment>
<comment type="similarity">
    <text evidence="6">Belongs to the protein kinase superfamily. CMGC Ser/Thr protein kinase family. CDC2/CDKX subfamily.</text>
</comment>
<name>CDK14_PLEMO</name>